<proteinExistence type="inferred from homology"/>
<accession>A8FLE2</accession>
<dbReference type="EC" id="2.1.1.228" evidence="1"/>
<dbReference type="EMBL" id="CP000814">
    <property type="protein sequence ID" value="ABV52279.1"/>
    <property type="molecule type" value="Genomic_DNA"/>
</dbReference>
<dbReference type="RefSeq" id="WP_002868040.1">
    <property type="nucleotide sequence ID" value="NC_009839.1"/>
</dbReference>
<dbReference type="SMR" id="A8FLE2"/>
<dbReference type="KEGG" id="cju:C8J_0680"/>
<dbReference type="HOGENOM" id="CLU_047363_0_1_7"/>
<dbReference type="GO" id="GO:0005829">
    <property type="term" value="C:cytosol"/>
    <property type="evidence" value="ECO:0007669"/>
    <property type="project" value="TreeGrafter"/>
</dbReference>
<dbReference type="GO" id="GO:0052906">
    <property type="term" value="F:tRNA (guanine(37)-N1)-methyltransferase activity"/>
    <property type="evidence" value="ECO:0007669"/>
    <property type="project" value="UniProtKB-UniRule"/>
</dbReference>
<dbReference type="GO" id="GO:0002939">
    <property type="term" value="P:tRNA N1-guanine methylation"/>
    <property type="evidence" value="ECO:0007669"/>
    <property type="project" value="TreeGrafter"/>
</dbReference>
<dbReference type="CDD" id="cd18080">
    <property type="entry name" value="TrmD-like"/>
    <property type="match status" value="1"/>
</dbReference>
<dbReference type="Gene3D" id="3.40.1280.10">
    <property type="match status" value="1"/>
</dbReference>
<dbReference type="Gene3D" id="1.10.1270.20">
    <property type="entry name" value="tRNA(m1g37)methyltransferase, domain 2"/>
    <property type="match status" value="1"/>
</dbReference>
<dbReference type="HAMAP" id="MF_00605">
    <property type="entry name" value="TrmD"/>
    <property type="match status" value="1"/>
</dbReference>
<dbReference type="InterPro" id="IPR029028">
    <property type="entry name" value="Alpha/beta_knot_MTases"/>
</dbReference>
<dbReference type="InterPro" id="IPR023148">
    <property type="entry name" value="tRNA_m1G_MeTrfase_C_sf"/>
</dbReference>
<dbReference type="InterPro" id="IPR002649">
    <property type="entry name" value="tRNA_m1G_MeTrfase_TrmD"/>
</dbReference>
<dbReference type="InterPro" id="IPR029026">
    <property type="entry name" value="tRNA_m1G_MTases_N"/>
</dbReference>
<dbReference type="InterPro" id="IPR016009">
    <property type="entry name" value="tRNA_MeTrfase_TRMD/TRM10"/>
</dbReference>
<dbReference type="NCBIfam" id="NF000648">
    <property type="entry name" value="PRK00026.1"/>
    <property type="match status" value="1"/>
</dbReference>
<dbReference type="NCBIfam" id="TIGR00088">
    <property type="entry name" value="trmD"/>
    <property type="match status" value="1"/>
</dbReference>
<dbReference type="PANTHER" id="PTHR46417">
    <property type="entry name" value="TRNA (GUANINE-N(1)-)-METHYLTRANSFERASE"/>
    <property type="match status" value="1"/>
</dbReference>
<dbReference type="PANTHER" id="PTHR46417:SF1">
    <property type="entry name" value="TRNA (GUANINE-N(1)-)-METHYLTRANSFERASE"/>
    <property type="match status" value="1"/>
</dbReference>
<dbReference type="Pfam" id="PF01746">
    <property type="entry name" value="tRNA_m1G_MT"/>
    <property type="match status" value="1"/>
</dbReference>
<dbReference type="PIRSF" id="PIRSF000386">
    <property type="entry name" value="tRNA_mtase"/>
    <property type="match status" value="1"/>
</dbReference>
<dbReference type="SUPFAM" id="SSF75217">
    <property type="entry name" value="alpha/beta knot"/>
    <property type="match status" value="1"/>
</dbReference>
<organism>
    <name type="scientific">Campylobacter jejuni subsp. jejuni serotype O:6 (strain 81116 / NCTC 11828)</name>
    <dbReference type="NCBI Taxonomy" id="407148"/>
    <lineage>
        <taxon>Bacteria</taxon>
        <taxon>Pseudomonadati</taxon>
        <taxon>Campylobacterota</taxon>
        <taxon>Epsilonproteobacteria</taxon>
        <taxon>Campylobacterales</taxon>
        <taxon>Campylobacteraceae</taxon>
        <taxon>Campylobacter</taxon>
    </lineage>
</organism>
<name>TRMD_CAMJ8</name>
<gene>
    <name evidence="1" type="primary">trmD</name>
    <name type="ordered locus">C8J_0680</name>
</gene>
<comment type="function">
    <text evidence="1">Specifically methylates guanosine-37 in various tRNAs.</text>
</comment>
<comment type="catalytic activity">
    <reaction evidence="1">
        <text>guanosine(37) in tRNA + S-adenosyl-L-methionine = N(1)-methylguanosine(37) in tRNA + S-adenosyl-L-homocysteine + H(+)</text>
        <dbReference type="Rhea" id="RHEA:36899"/>
        <dbReference type="Rhea" id="RHEA-COMP:10145"/>
        <dbReference type="Rhea" id="RHEA-COMP:10147"/>
        <dbReference type="ChEBI" id="CHEBI:15378"/>
        <dbReference type="ChEBI" id="CHEBI:57856"/>
        <dbReference type="ChEBI" id="CHEBI:59789"/>
        <dbReference type="ChEBI" id="CHEBI:73542"/>
        <dbReference type="ChEBI" id="CHEBI:74269"/>
        <dbReference type="EC" id="2.1.1.228"/>
    </reaction>
</comment>
<comment type="subunit">
    <text evidence="1">Homodimer.</text>
</comment>
<comment type="subcellular location">
    <subcellularLocation>
        <location evidence="1">Cytoplasm</location>
    </subcellularLocation>
</comment>
<comment type="similarity">
    <text evidence="1">Belongs to the RNA methyltransferase TrmD family.</text>
</comment>
<keyword id="KW-0963">Cytoplasm</keyword>
<keyword id="KW-0489">Methyltransferase</keyword>
<keyword id="KW-0949">S-adenosyl-L-methionine</keyword>
<keyword id="KW-0808">Transferase</keyword>
<keyword id="KW-0819">tRNA processing</keyword>
<protein>
    <recommendedName>
        <fullName evidence="1">tRNA (guanine-N(1)-)-methyltransferase</fullName>
        <ecNumber evidence="1">2.1.1.228</ecNumber>
    </recommendedName>
    <alternativeName>
        <fullName evidence="1">M1G-methyltransferase</fullName>
    </alternativeName>
    <alternativeName>
        <fullName evidence="1">tRNA [GM37] methyltransferase</fullName>
    </alternativeName>
</protein>
<evidence type="ECO:0000255" key="1">
    <source>
        <dbReference type="HAMAP-Rule" id="MF_00605"/>
    </source>
</evidence>
<sequence length="234" mass="27110">MKFSFVSLFPNLMEFYFQDSILARAKEKKLFKLNFYNPRDFSKNSYHKVDDYKIGGGAGLLMQAEPMYEVLRSIQEKKENPYFIFLNPSGKTFNQKDAKRLSKKEHIVFVCGRYEGIDERVLEIFANEVFSIGDFILTGGELPALVMCDAILRNVNGVLGNMESLEEESFENNLLEAPAFSKPFIFEKKNKKFYTPSEFLKGNHARIASLKTTLASCKTKFFRPDLFLEHERKK</sequence>
<reference key="1">
    <citation type="journal article" date="2007" name="J. Bacteriol.">
        <title>The complete genome sequence of Campylobacter jejuni strain 81116 (NCTC11828).</title>
        <authorList>
            <person name="Pearson B.M."/>
            <person name="Gaskin D.J.H."/>
            <person name="Segers R.P.A.M."/>
            <person name="Wells J.M."/>
            <person name="Nuijten P.J.M."/>
            <person name="van Vliet A.H.M."/>
        </authorList>
    </citation>
    <scope>NUCLEOTIDE SEQUENCE [LARGE SCALE GENOMIC DNA]</scope>
    <source>
        <strain>81116 / NCTC 11828</strain>
    </source>
</reference>
<feature type="chain" id="PRO_1000072636" description="tRNA (guanine-N(1)-)-methyltransferase">
    <location>
        <begin position="1"/>
        <end position="234"/>
    </location>
</feature>
<feature type="binding site" evidence="1">
    <location>
        <position position="112"/>
    </location>
    <ligand>
        <name>S-adenosyl-L-methionine</name>
        <dbReference type="ChEBI" id="CHEBI:59789"/>
    </ligand>
</feature>
<feature type="binding site" evidence="1">
    <location>
        <begin position="132"/>
        <end position="137"/>
    </location>
    <ligand>
        <name>S-adenosyl-L-methionine</name>
        <dbReference type="ChEBI" id="CHEBI:59789"/>
    </ligand>
</feature>